<dbReference type="EC" id="2.7.7.6" evidence="1"/>
<dbReference type="EMBL" id="CT573213">
    <property type="protein sequence ID" value="CAJ59774.1"/>
    <property type="molecule type" value="Genomic_DNA"/>
</dbReference>
<dbReference type="RefSeq" id="WP_009740501.1">
    <property type="nucleotide sequence ID" value="NC_008278.1"/>
</dbReference>
<dbReference type="SMR" id="Q0RRP3"/>
<dbReference type="STRING" id="326424.FRAAL1110"/>
<dbReference type="KEGG" id="fal:FRAAL1110"/>
<dbReference type="eggNOG" id="COG0202">
    <property type="taxonomic scope" value="Bacteria"/>
</dbReference>
<dbReference type="HOGENOM" id="CLU_053084_0_1_11"/>
<dbReference type="OrthoDB" id="9805706at2"/>
<dbReference type="Proteomes" id="UP000000657">
    <property type="component" value="Chromosome"/>
</dbReference>
<dbReference type="GO" id="GO:0005737">
    <property type="term" value="C:cytoplasm"/>
    <property type="evidence" value="ECO:0007669"/>
    <property type="project" value="UniProtKB-ARBA"/>
</dbReference>
<dbReference type="GO" id="GO:0000428">
    <property type="term" value="C:DNA-directed RNA polymerase complex"/>
    <property type="evidence" value="ECO:0007669"/>
    <property type="project" value="UniProtKB-KW"/>
</dbReference>
<dbReference type="GO" id="GO:0003677">
    <property type="term" value="F:DNA binding"/>
    <property type="evidence" value="ECO:0007669"/>
    <property type="project" value="UniProtKB-UniRule"/>
</dbReference>
<dbReference type="GO" id="GO:0003899">
    <property type="term" value="F:DNA-directed RNA polymerase activity"/>
    <property type="evidence" value="ECO:0007669"/>
    <property type="project" value="UniProtKB-UniRule"/>
</dbReference>
<dbReference type="GO" id="GO:0046983">
    <property type="term" value="F:protein dimerization activity"/>
    <property type="evidence" value="ECO:0007669"/>
    <property type="project" value="InterPro"/>
</dbReference>
<dbReference type="GO" id="GO:0006351">
    <property type="term" value="P:DNA-templated transcription"/>
    <property type="evidence" value="ECO:0007669"/>
    <property type="project" value="UniProtKB-UniRule"/>
</dbReference>
<dbReference type="CDD" id="cd06928">
    <property type="entry name" value="RNAP_alpha_NTD"/>
    <property type="match status" value="1"/>
</dbReference>
<dbReference type="FunFam" id="1.10.150.20:FF:000001">
    <property type="entry name" value="DNA-directed RNA polymerase subunit alpha"/>
    <property type="match status" value="1"/>
</dbReference>
<dbReference type="FunFam" id="2.170.120.12:FF:000001">
    <property type="entry name" value="DNA-directed RNA polymerase subunit alpha"/>
    <property type="match status" value="1"/>
</dbReference>
<dbReference type="Gene3D" id="1.10.150.20">
    <property type="entry name" value="5' to 3' exonuclease, C-terminal subdomain"/>
    <property type="match status" value="1"/>
</dbReference>
<dbReference type="Gene3D" id="2.170.120.12">
    <property type="entry name" value="DNA-directed RNA polymerase, insert domain"/>
    <property type="match status" value="1"/>
</dbReference>
<dbReference type="Gene3D" id="3.30.1360.10">
    <property type="entry name" value="RNA polymerase, RBP11-like subunit"/>
    <property type="match status" value="1"/>
</dbReference>
<dbReference type="HAMAP" id="MF_00059">
    <property type="entry name" value="RNApol_bact_RpoA"/>
    <property type="match status" value="1"/>
</dbReference>
<dbReference type="InterPro" id="IPR011262">
    <property type="entry name" value="DNA-dir_RNA_pol_insert"/>
</dbReference>
<dbReference type="InterPro" id="IPR011263">
    <property type="entry name" value="DNA-dir_RNA_pol_RpoA/D/Rpb3"/>
</dbReference>
<dbReference type="InterPro" id="IPR011773">
    <property type="entry name" value="DNA-dir_RpoA"/>
</dbReference>
<dbReference type="InterPro" id="IPR036603">
    <property type="entry name" value="RBP11-like"/>
</dbReference>
<dbReference type="InterPro" id="IPR011260">
    <property type="entry name" value="RNAP_asu_C"/>
</dbReference>
<dbReference type="InterPro" id="IPR036643">
    <property type="entry name" value="RNApol_insert_sf"/>
</dbReference>
<dbReference type="NCBIfam" id="NF003513">
    <property type="entry name" value="PRK05182.1-2"/>
    <property type="match status" value="1"/>
</dbReference>
<dbReference type="NCBIfam" id="NF003514">
    <property type="entry name" value="PRK05182.1-4"/>
    <property type="match status" value="1"/>
</dbReference>
<dbReference type="NCBIfam" id="NF003519">
    <property type="entry name" value="PRK05182.2-5"/>
    <property type="match status" value="1"/>
</dbReference>
<dbReference type="NCBIfam" id="TIGR02027">
    <property type="entry name" value="rpoA"/>
    <property type="match status" value="1"/>
</dbReference>
<dbReference type="Pfam" id="PF01000">
    <property type="entry name" value="RNA_pol_A_bac"/>
    <property type="match status" value="1"/>
</dbReference>
<dbReference type="Pfam" id="PF03118">
    <property type="entry name" value="RNA_pol_A_CTD"/>
    <property type="match status" value="1"/>
</dbReference>
<dbReference type="Pfam" id="PF01193">
    <property type="entry name" value="RNA_pol_L"/>
    <property type="match status" value="1"/>
</dbReference>
<dbReference type="SMART" id="SM00662">
    <property type="entry name" value="RPOLD"/>
    <property type="match status" value="1"/>
</dbReference>
<dbReference type="SUPFAM" id="SSF47789">
    <property type="entry name" value="C-terminal domain of RNA polymerase alpha subunit"/>
    <property type="match status" value="1"/>
</dbReference>
<dbReference type="SUPFAM" id="SSF56553">
    <property type="entry name" value="Insert subdomain of RNA polymerase alpha subunit"/>
    <property type="match status" value="1"/>
</dbReference>
<dbReference type="SUPFAM" id="SSF55257">
    <property type="entry name" value="RBP11-like subunits of RNA polymerase"/>
    <property type="match status" value="1"/>
</dbReference>
<protein>
    <recommendedName>
        <fullName evidence="1">DNA-directed RNA polymerase subunit alpha</fullName>
        <shortName evidence="1">RNAP subunit alpha</shortName>
        <ecNumber evidence="1">2.7.7.6</ecNumber>
    </recommendedName>
    <alternativeName>
        <fullName evidence="1">RNA polymerase subunit alpha</fullName>
    </alternativeName>
    <alternativeName>
        <fullName evidence="1">Transcriptase subunit alpha</fullName>
    </alternativeName>
</protein>
<sequence length="349" mass="37831">MLIAQRPTLVEDPISEFRSRFVIEPLEPGFGYTLGNSLRRTLLSSIPGASVTSIRIDGVLHEFSTVPGVKEDVTDLILNLKELVVSSDNDEPTVMYLRKQGPGEVTAADIAPPAGVEVHSPELRLATLNDKGKLEIELTVERGRGYVSAAQNKQAGQEIGRIPIDSIYSPVLKVTYKVEATRVEQRTDFDRLIVDVETKPSISPRDAMASAGKTLVGLFGLAQELNAEAEGVDIGPSAADAALAADLALPIEEMDLTVRSYNCLKREGIHTIGELVSRSEADLLDIRNFGQKSIDEVKTKLGAMGLQLKDSPPGFDPRQAVDTYGTDSYNPAFSDPSDDGAEFVETEQY</sequence>
<name>RPOA_FRAAA</name>
<proteinExistence type="inferred from homology"/>
<evidence type="ECO:0000255" key="1">
    <source>
        <dbReference type="HAMAP-Rule" id="MF_00059"/>
    </source>
</evidence>
<evidence type="ECO:0000256" key="2">
    <source>
        <dbReference type="SAM" id="MobiDB-lite"/>
    </source>
</evidence>
<organism>
    <name type="scientific">Frankia alni (strain DSM 45986 / CECT 9034 / ACN14a)</name>
    <dbReference type="NCBI Taxonomy" id="326424"/>
    <lineage>
        <taxon>Bacteria</taxon>
        <taxon>Bacillati</taxon>
        <taxon>Actinomycetota</taxon>
        <taxon>Actinomycetes</taxon>
        <taxon>Frankiales</taxon>
        <taxon>Frankiaceae</taxon>
        <taxon>Frankia</taxon>
    </lineage>
</organism>
<accession>Q0RRP3</accession>
<keyword id="KW-0240">DNA-directed RNA polymerase</keyword>
<keyword id="KW-0548">Nucleotidyltransferase</keyword>
<keyword id="KW-1185">Reference proteome</keyword>
<keyword id="KW-0804">Transcription</keyword>
<keyword id="KW-0808">Transferase</keyword>
<comment type="function">
    <text evidence="1">DNA-dependent RNA polymerase catalyzes the transcription of DNA into RNA using the four ribonucleoside triphosphates as substrates.</text>
</comment>
<comment type="catalytic activity">
    <reaction evidence="1">
        <text>RNA(n) + a ribonucleoside 5'-triphosphate = RNA(n+1) + diphosphate</text>
        <dbReference type="Rhea" id="RHEA:21248"/>
        <dbReference type="Rhea" id="RHEA-COMP:14527"/>
        <dbReference type="Rhea" id="RHEA-COMP:17342"/>
        <dbReference type="ChEBI" id="CHEBI:33019"/>
        <dbReference type="ChEBI" id="CHEBI:61557"/>
        <dbReference type="ChEBI" id="CHEBI:140395"/>
        <dbReference type="EC" id="2.7.7.6"/>
    </reaction>
</comment>
<comment type="subunit">
    <text evidence="1">Homodimer. The RNAP catalytic core consists of 2 alpha, 1 beta, 1 beta' and 1 omega subunit. When a sigma factor is associated with the core the holoenzyme is formed, which can initiate transcription.</text>
</comment>
<comment type="domain">
    <text evidence="1">The N-terminal domain is essential for RNAP assembly and basal transcription, whereas the C-terminal domain is involved in interaction with transcriptional regulators and with upstream promoter elements.</text>
</comment>
<comment type="similarity">
    <text evidence="1">Belongs to the RNA polymerase alpha chain family.</text>
</comment>
<gene>
    <name evidence="1" type="primary">rpoA</name>
    <name type="ordered locus">FRAAL1110</name>
</gene>
<feature type="chain" id="PRO_0000296814" description="DNA-directed RNA polymerase subunit alpha">
    <location>
        <begin position="1"/>
        <end position="349"/>
    </location>
</feature>
<feature type="region of interest" description="Alpha N-terminal domain (alpha-NTD)" evidence="1">
    <location>
        <begin position="1"/>
        <end position="226"/>
    </location>
</feature>
<feature type="region of interest" description="Alpha C-terminal domain (alpha-CTD)" evidence="1">
    <location>
        <begin position="241"/>
        <end position="349"/>
    </location>
</feature>
<feature type="region of interest" description="Disordered" evidence="2">
    <location>
        <begin position="308"/>
        <end position="349"/>
    </location>
</feature>
<feature type="compositionally biased region" description="Acidic residues" evidence="2">
    <location>
        <begin position="336"/>
        <end position="349"/>
    </location>
</feature>
<reference key="1">
    <citation type="journal article" date="2007" name="Genome Res.">
        <title>Genome characteristics of facultatively symbiotic Frankia sp. strains reflect host range and host plant biogeography.</title>
        <authorList>
            <person name="Normand P."/>
            <person name="Lapierre P."/>
            <person name="Tisa L.S."/>
            <person name="Gogarten J.P."/>
            <person name="Alloisio N."/>
            <person name="Bagnarol E."/>
            <person name="Bassi C.A."/>
            <person name="Berry A.M."/>
            <person name="Bickhart D.M."/>
            <person name="Choisne N."/>
            <person name="Couloux A."/>
            <person name="Cournoyer B."/>
            <person name="Cruveiller S."/>
            <person name="Daubin V."/>
            <person name="Demange N."/>
            <person name="Francino M.P."/>
            <person name="Goltsman E."/>
            <person name="Huang Y."/>
            <person name="Kopp O.R."/>
            <person name="Labarre L."/>
            <person name="Lapidus A."/>
            <person name="Lavire C."/>
            <person name="Marechal J."/>
            <person name="Martinez M."/>
            <person name="Mastronunzio J.E."/>
            <person name="Mullin B.C."/>
            <person name="Niemann J."/>
            <person name="Pujic P."/>
            <person name="Rawnsley T."/>
            <person name="Rouy Z."/>
            <person name="Schenowitz C."/>
            <person name="Sellstedt A."/>
            <person name="Tavares F."/>
            <person name="Tomkins J.P."/>
            <person name="Vallenet D."/>
            <person name="Valverde C."/>
            <person name="Wall L.G."/>
            <person name="Wang Y."/>
            <person name="Medigue C."/>
            <person name="Benson D.R."/>
        </authorList>
    </citation>
    <scope>NUCLEOTIDE SEQUENCE [LARGE SCALE GENOMIC DNA]</scope>
    <source>
        <strain>DSM 45986 / CECT 9034 / ACN14a</strain>
    </source>
</reference>